<organism>
    <name type="scientific">Mesomycoplasma hyopneumoniae (strain J / ATCC 25934 / NCTC 10110)</name>
    <name type="common">Mycoplasma hyopneumoniae</name>
    <dbReference type="NCBI Taxonomy" id="262719"/>
    <lineage>
        <taxon>Bacteria</taxon>
        <taxon>Bacillati</taxon>
        <taxon>Mycoplasmatota</taxon>
        <taxon>Mycoplasmoidales</taxon>
        <taxon>Metamycoplasmataceae</taxon>
        <taxon>Mesomycoplasma</taxon>
    </lineage>
</organism>
<keyword id="KW-0131">Cell cycle</keyword>
<keyword id="KW-0132">Cell division</keyword>
<keyword id="KW-0143">Chaperone</keyword>
<keyword id="KW-0963">Cytoplasm</keyword>
<keyword id="KW-0413">Isomerase</keyword>
<keyword id="KW-0697">Rotamase</keyword>
<sequence>MIKREFLPESAELKIKLTADSKKWAEFYQKAEQKQAAKVSLRGFRKGKVPLEKARAYLNPQAVFELALRMFLPELEKQAATNIIDSDNVIESPIFNIVNMDKNNLEIEFLYPVYPEIKLPDYKNLKTKFAIKKITKEDIELQKQKLLEAKGRFIEVNRPVKIGDVINFNFKGFIDDEPFDGGEGENFDLRIGSNSFIAGFEEQLVGLEIKKEADIYVTFPENYQVHTYANKKARFRVRINKIKENQPAKLTNEFVASLKIQNVETISQLEVYLENLTERENIERAKIDFQRNALTEIGEQVEVPLAKKLINLEIERLNEVFHSTLKQQEIPLKEYLKITKFTEKDIYDQFEVEAKKLLKNSFIFAEIAKLEGLVPTQQEYESHVEKLAKFTGKSVQEISETVSYNEIQINITNQKVIDKLIEFNHEAKDEEIVNKNQNDNEIEQDKEQKDNNEEKIKQENNLENK</sequence>
<comment type="function">
    <text evidence="1">Involved in protein export. Acts as a chaperone by maintaining the newly synthesized protein in an open conformation. Functions as a peptidyl-prolyl cis-trans isomerase.</text>
</comment>
<comment type="catalytic activity">
    <reaction evidence="1">
        <text>[protein]-peptidylproline (omega=180) = [protein]-peptidylproline (omega=0)</text>
        <dbReference type="Rhea" id="RHEA:16237"/>
        <dbReference type="Rhea" id="RHEA-COMP:10747"/>
        <dbReference type="Rhea" id="RHEA-COMP:10748"/>
        <dbReference type="ChEBI" id="CHEBI:83833"/>
        <dbReference type="ChEBI" id="CHEBI:83834"/>
        <dbReference type="EC" id="5.2.1.8"/>
    </reaction>
</comment>
<comment type="subcellular location">
    <subcellularLocation>
        <location>Cytoplasm</location>
    </subcellularLocation>
    <text evidence="1">About half TF is bound to the ribosome near the polypeptide exit tunnel while the other half is free in the cytoplasm.</text>
</comment>
<comment type="domain">
    <text evidence="1">Consists of 3 domains; the N-terminus binds the ribosome, the middle domain has PPIase activity, while the C-terminus has intrinsic chaperone activity on its own.</text>
</comment>
<comment type="similarity">
    <text evidence="1">Belongs to the FKBP-type PPIase family. Tig subfamily.</text>
</comment>
<proteinExistence type="inferred from homology"/>
<dbReference type="EC" id="5.2.1.8" evidence="1"/>
<dbReference type="EMBL" id="AE017243">
    <property type="protein sequence ID" value="AAZ44236.2"/>
    <property type="molecule type" value="Genomic_DNA"/>
</dbReference>
<dbReference type="RefSeq" id="WP_044284594.1">
    <property type="nucleotide sequence ID" value="NC_007295.1"/>
</dbReference>
<dbReference type="SMR" id="Q4AAI5"/>
<dbReference type="GeneID" id="41334448"/>
<dbReference type="KEGG" id="mhj:MHJ_0145"/>
<dbReference type="eggNOG" id="COG0544">
    <property type="taxonomic scope" value="Bacteria"/>
</dbReference>
<dbReference type="HOGENOM" id="CLU_033058_3_2_14"/>
<dbReference type="OrthoDB" id="9767721at2"/>
<dbReference type="Proteomes" id="UP000000548">
    <property type="component" value="Chromosome"/>
</dbReference>
<dbReference type="GO" id="GO:0005737">
    <property type="term" value="C:cytoplasm"/>
    <property type="evidence" value="ECO:0007669"/>
    <property type="project" value="UniProtKB-SubCell"/>
</dbReference>
<dbReference type="GO" id="GO:0003755">
    <property type="term" value="F:peptidyl-prolyl cis-trans isomerase activity"/>
    <property type="evidence" value="ECO:0007669"/>
    <property type="project" value="UniProtKB-UniRule"/>
</dbReference>
<dbReference type="GO" id="GO:0051301">
    <property type="term" value="P:cell division"/>
    <property type="evidence" value="ECO:0007669"/>
    <property type="project" value="UniProtKB-KW"/>
</dbReference>
<dbReference type="GO" id="GO:0006457">
    <property type="term" value="P:protein folding"/>
    <property type="evidence" value="ECO:0007669"/>
    <property type="project" value="UniProtKB-UniRule"/>
</dbReference>
<dbReference type="GO" id="GO:0015031">
    <property type="term" value="P:protein transport"/>
    <property type="evidence" value="ECO:0007669"/>
    <property type="project" value="UniProtKB-UniRule"/>
</dbReference>
<dbReference type="FunFam" id="3.10.50.40:FF:000001">
    <property type="entry name" value="Trigger factor"/>
    <property type="match status" value="1"/>
</dbReference>
<dbReference type="Gene3D" id="3.10.50.40">
    <property type="match status" value="1"/>
</dbReference>
<dbReference type="Gene3D" id="3.30.70.1050">
    <property type="entry name" value="Trigger factor ribosome-binding domain"/>
    <property type="match status" value="1"/>
</dbReference>
<dbReference type="Gene3D" id="1.10.3120.10">
    <property type="entry name" value="Trigger factor, C-terminal domain"/>
    <property type="match status" value="1"/>
</dbReference>
<dbReference type="HAMAP" id="MF_00303">
    <property type="entry name" value="Trigger_factor_Tig"/>
    <property type="match status" value="1"/>
</dbReference>
<dbReference type="InterPro" id="IPR046357">
    <property type="entry name" value="PPIase_dom_sf"/>
</dbReference>
<dbReference type="InterPro" id="IPR001179">
    <property type="entry name" value="PPIase_FKBP_dom"/>
</dbReference>
<dbReference type="InterPro" id="IPR005215">
    <property type="entry name" value="Trig_fac"/>
</dbReference>
<dbReference type="InterPro" id="IPR008880">
    <property type="entry name" value="Trigger_fac_C"/>
</dbReference>
<dbReference type="InterPro" id="IPR037041">
    <property type="entry name" value="Trigger_fac_C_sf"/>
</dbReference>
<dbReference type="InterPro" id="IPR008881">
    <property type="entry name" value="Trigger_fac_ribosome-bd_bac"/>
</dbReference>
<dbReference type="InterPro" id="IPR036611">
    <property type="entry name" value="Trigger_fac_ribosome-bd_sf"/>
</dbReference>
<dbReference type="InterPro" id="IPR027304">
    <property type="entry name" value="Trigger_fact/SurA_dom_sf"/>
</dbReference>
<dbReference type="NCBIfam" id="TIGR00115">
    <property type="entry name" value="tig"/>
    <property type="match status" value="1"/>
</dbReference>
<dbReference type="Pfam" id="PF00254">
    <property type="entry name" value="FKBP_C"/>
    <property type="match status" value="1"/>
</dbReference>
<dbReference type="Pfam" id="PF05698">
    <property type="entry name" value="Trigger_C"/>
    <property type="match status" value="1"/>
</dbReference>
<dbReference type="Pfam" id="PF05697">
    <property type="entry name" value="Trigger_N"/>
    <property type="match status" value="1"/>
</dbReference>
<dbReference type="PIRSF" id="PIRSF003095">
    <property type="entry name" value="Trigger_factor"/>
    <property type="match status" value="1"/>
</dbReference>
<dbReference type="SUPFAM" id="SSF54534">
    <property type="entry name" value="FKBP-like"/>
    <property type="match status" value="1"/>
</dbReference>
<dbReference type="SUPFAM" id="SSF109998">
    <property type="entry name" value="Triger factor/SurA peptide-binding domain-like"/>
    <property type="match status" value="1"/>
</dbReference>
<dbReference type="SUPFAM" id="SSF102735">
    <property type="entry name" value="Trigger factor ribosome-binding domain"/>
    <property type="match status" value="1"/>
</dbReference>
<dbReference type="PROSITE" id="PS50059">
    <property type="entry name" value="FKBP_PPIASE"/>
    <property type="match status" value="1"/>
</dbReference>
<name>TIG_MESHJ</name>
<evidence type="ECO:0000255" key="1">
    <source>
        <dbReference type="HAMAP-Rule" id="MF_00303"/>
    </source>
</evidence>
<evidence type="ECO:0000256" key="2">
    <source>
        <dbReference type="SAM" id="MobiDB-lite"/>
    </source>
</evidence>
<accession>Q4AAI5</accession>
<gene>
    <name evidence="1" type="primary">tig</name>
    <name type="ordered locus">MHJ_0145</name>
</gene>
<reference key="1">
    <citation type="journal article" date="2005" name="J. Bacteriol.">
        <title>Swine and poultry pathogens: the complete genome sequences of two strains of Mycoplasma hyopneumoniae and a strain of Mycoplasma synoviae.</title>
        <authorList>
            <person name="Vasconcelos A.T.R."/>
            <person name="Ferreira H.B."/>
            <person name="Bizarro C.V."/>
            <person name="Bonatto S.L."/>
            <person name="Carvalho M.O."/>
            <person name="Pinto P.M."/>
            <person name="Almeida D.F."/>
            <person name="Almeida L.G.P."/>
            <person name="Almeida R."/>
            <person name="Alves-Junior L."/>
            <person name="Assuncao E.N."/>
            <person name="Azevedo V.A.C."/>
            <person name="Bogo M.R."/>
            <person name="Brigido M.M."/>
            <person name="Brocchi M."/>
            <person name="Burity H.A."/>
            <person name="Camargo A.A."/>
            <person name="Camargo S.S."/>
            <person name="Carepo M.S."/>
            <person name="Carraro D.M."/>
            <person name="de Mattos Cascardo J.C."/>
            <person name="Castro L.A."/>
            <person name="Cavalcanti G."/>
            <person name="Chemale G."/>
            <person name="Collevatti R.G."/>
            <person name="Cunha C.W."/>
            <person name="Dallagiovanna B."/>
            <person name="Dambros B.P."/>
            <person name="Dellagostin O.A."/>
            <person name="Falcao C."/>
            <person name="Fantinatti-Garboggini F."/>
            <person name="Felipe M.S.S."/>
            <person name="Fiorentin L."/>
            <person name="Franco G.R."/>
            <person name="Freitas N.S.A."/>
            <person name="Frias D."/>
            <person name="Grangeiro T.B."/>
            <person name="Grisard E.C."/>
            <person name="Guimaraes C.T."/>
            <person name="Hungria M."/>
            <person name="Jardim S.N."/>
            <person name="Krieger M.A."/>
            <person name="Laurino J.P."/>
            <person name="Lima L.F.A."/>
            <person name="Lopes M.I."/>
            <person name="Loreto E.L.S."/>
            <person name="Madeira H.M.F."/>
            <person name="Manfio G.P."/>
            <person name="Maranhao A.Q."/>
            <person name="Martinkovics C.T."/>
            <person name="Medeiros S.R.B."/>
            <person name="Moreira M.A.M."/>
            <person name="Neiva M."/>
            <person name="Ramalho-Neto C.E."/>
            <person name="Nicolas M.F."/>
            <person name="Oliveira S.C."/>
            <person name="Paixao R.F.C."/>
            <person name="Pedrosa F.O."/>
            <person name="Pena S.D.J."/>
            <person name="Pereira M."/>
            <person name="Pereira-Ferrari L."/>
            <person name="Piffer I."/>
            <person name="Pinto L.S."/>
            <person name="Potrich D.P."/>
            <person name="Salim A.C.M."/>
            <person name="Santos F.R."/>
            <person name="Schmitt R."/>
            <person name="Schneider M.P.C."/>
            <person name="Schrank A."/>
            <person name="Schrank I.S."/>
            <person name="Schuck A.F."/>
            <person name="Seuanez H.N."/>
            <person name="Silva D.W."/>
            <person name="Silva R."/>
            <person name="Silva S.C."/>
            <person name="Soares C.M.A."/>
            <person name="Souza K.R.L."/>
            <person name="Souza R.C."/>
            <person name="Staats C.C."/>
            <person name="Steffens M.B.R."/>
            <person name="Teixeira S.M.R."/>
            <person name="Urmenyi T.P."/>
            <person name="Vainstein M.H."/>
            <person name="Zuccherato L.W."/>
            <person name="Simpson A.J.G."/>
            <person name="Zaha A."/>
        </authorList>
    </citation>
    <scope>NUCLEOTIDE SEQUENCE [LARGE SCALE GENOMIC DNA]</scope>
    <source>
        <strain>J / ATCC 25934 / NCTC 10110</strain>
    </source>
</reference>
<feature type="chain" id="PRO_0000256577" description="Trigger factor">
    <location>
        <begin position="1"/>
        <end position="465"/>
    </location>
</feature>
<feature type="domain" description="PPIase FKBP-type" evidence="1">
    <location>
        <begin position="163"/>
        <end position="248"/>
    </location>
</feature>
<feature type="region of interest" description="Disordered" evidence="2">
    <location>
        <begin position="431"/>
        <end position="465"/>
    </location>
</feature>
<feature type="compositionally biased region" description="Basic and acidic residues" evidence="2">
    <location>
        <begin position="443"/>
        <end position="465"/>
    </location>
</feature>
<protein>
    <recommendedName>
        <fullName evidence="1">Trigger factor</fullName>
        <shortName evidence="1">TF</shortName>
        <ecNumber evidence="1">5.2.1.8</ecNumber>
    </recommendedName>
    <alternativeName>
        <fullName evidence="1">PPIase</fullName>
    </alternativeName>
</protein>